<evidence type="ECO:0000255" key="1">
    <source>
        <dbReference type="HAMAP-Rule" id="MF_00095"/>
    </source>
</evidence>
<dbReference type="EMBL" id="CP000057">
    <property type="protein sequence ID" value="AAX88251.1"/>
    <property type="molecule type" value="Genomic_DNA"/>
</dbReference>
<dbReference type="RefSeq" id="WP_005632483.1">
    <property type="nucleotide sequence ID" value="NC_007146.2"/>
</dbReference>
<dbReference type="SMR" id="Q4QL46"/>
<dbReference type="GeneID" id="93220260"/>
<dbReference type="KEGG" id="hit:NTHI1431"/>
<dbReference type="HOGENOM" id="CLU_052299_2_0_6"/>
<dbReference type="Proteomes" id="UP000002525">
    <property type="component" value="Chromosome"/>
</dbReference>
<dbReference type="GO" id="GO:0003677">
    <property type="term" value="F:DNA binding"/>
    <property type="evidence" value="ECO:0007669"/>
    <property type="project" value="InterPro"/>
</dbReference>
<dbReference type="CDD" id="cd22359">
    <property type="entry name" value="SfsA-like_bacterial"/>
    <property type="match status" value="1"/>
</dbReference>
<dbReference type="FunFam" id="2.40.50.580:FF:000001">
    <property type="entry name" value="Sugar fermentation stimulation protein A"/>
    <property type="match status" value="1"/>
</dbReference>
<dbReference type="FunFam" id="3.40.1350.60:FF:000001">
    <property type="entry name" value="Sugar fermentation stimulation protein A"/>
    <property type="match status" value="1"/>
</dbReference>
<dbReference type="Gene3D" id="2.40.50.580">
    <property type="match status" value="1"/>
</dbReference>
<dbReference type="Gene3D" id="3.40.1350.60">
    <property type="match status" value="1"/>
</dbReference>
<dbReference type="HAMAP" id="MF_00095">
    <property type="entry name" value="SfsA"/>
    <property type="match status" value="1"/>
</dbReference>
<dbReference type="InterPro" id="IPR005224">
    <property type="entry name" value="SfsA"/>
</dbReference>
<dbReference type="InterPro" id="IPR040452">
    <property type="entry name" value="SfsA_C"/>
</dbReference>
<dbReference type="InterPro" id="IPR041465">
    <property type="entry name" value="SfsA_N"/>
</dbReference>
<dbReference type="NCBIfam" id="TIGR00230">
    <property type="entry name" value="sfsA"/>
    <property type="match status" value="1"/>
</dbReference>
<dbReference type="PANTHER" id="PTHR30545">
    <property type="entry name" value="SUGAR FERMENTATION STIMULATION PROTEIN A"/>
    <property type="match status" value="1"/>
</dbReference>
<dbReference type="PANTHER" id="PTHR30545:SF2">
    <property type="entry name" value="SUGAR FERMENTATION STIMULATION PROTEIN A"/>
    <property type="match status" value="1"/>
</dbReference>
<dbReference type="Pfam" id="PF03749">
    <property type="entry name" value="SfsA"/>
    <property type="match status" value="1"/>
</dbReference>
<dbReference type="Pfam" id="PF17746">
    <property type="entry name" value="SfsA_N"/>
    <property type="match status" value="1"/>
</dbReference>
<accession>Q4QL46</accession>
<protein>
    <recommendedName>
        <fullName evidence="1">Sugar fermentation stimulation protein homolog</fullName>
    </recommendedName>
</protein>
<reference key="1">
    <citation type="journal article" date="2005" name="J. Bacteriol.">
        <title>Genomic sequence of an otitis media isolate of nontypeable Haemophilus influenzae: comparative study with H. influenzae serotype d, strain KW20.</title>
        <authorList>
            <person name="Harrison A."/>
            <person name="Dyer D.W."/>
            <person name="Gillaspy A."/>
            <person name="Ray W.C."/>
            <person name="Mungur R."/>
            <person name="Carson M.B."/>
            <person name="Zhong H."/>
            <person name="Gipson J."/>
            <person name="Gipson M."/>
            <person name="Johnson L.S."/>
            <person name="Lewis L."/>
            <person name="Bakaletz L.O."/>
            <person name="Munson R.S. Jr."/>
        </authorList>
    </citation>
    <scope>NUCLEOTIDE SEQUENCE [LARGE SCALE GENOMIC DNA]</scope>
    <source>
        <strain>86-028NP</strain>
    </source>
</reference>
<sequence>MQLPALQSAKLIRRYKRFLADIELPTGDVMTIHCANTGAMTGCGEKGDTIWYSHSDSQTRKYPHSWELTQLANGQLCCINTHRSNQLVFEALQNKQIKELAMYDEIYPEVKYGEENSRIDFLLKGEGLPDCYVEVKSITLVKGNLGMFPDAVTTRGQKHVRELLAMKKQGHRAVVLFAGLHNGFDRFKIAEYIDPEYDRLLKEAMEQGVEAYAYAGQFEISNEIPTALSLTESVPYIK</sequence>
<feature type="chain" id="PRO_1000007984" description="Sugar fermentation stimulation protein homolog">
    <location>
        <begin position="1"/>
        <end position="238"/>
    </location>
</feature>
<proteinExistence type="inferred from homology"/>
<gene>
    <name evidence="1" type="primary">sfsA</name>
    <name type="ordered locus">NTHI1431</name>
</gene>
<name>SFSA_HAEI8</name>
<comment type="similarity">
    <text evidence="1">Belongs to the SfsA family.</text>
</comment>
<organism>
    <name type="scientific">Haemophilus influenzae (strain 86-028NP)</name>
    <dbReference type="NCBI Taxonomy" id="281310"/>
    <lineage>
        <taxon>Bacteria</taxon>
        <taxon>Pseudomonadati</taxon>
        <taxon>Pseudomonadota</taxon>
        <taxon>Gammaproteobacteria</taxon>
        <taxon>Pasteurellales</taxon>
        <taxon>Pasteurellaceae</taxon>
        <taxon>Haemophilus</taxon>
    </lineage>
</organism>